<comment type="function">
    <text evidence="1">Activates insulin and somatostatin gene transcription. Key regulator of islet peptide hormone expression but also responsible for the development of the pancreas, most probably by determining maturation and differentiation of common pancreatic precursor cells in the developing gut. As part of a PDX1:PBX1b:MEIS2b complex in pancreatic acinar cells is involved in the transcriptional activation of the ELA1 enhancer; the complex binds to the enhancer B element and cooperates with the transcription factor 1 complex (PTF1) bound to the enhancer A element. Binds the DNA sequence 5'-CC[CT]TAATGGG-3' (By similarity).</text>
</comment>
<comment type="subunit">
    <text evidence="1">Interacts with the basic helix-loop-helix domains of TCF3(E47) and NEUROD1 and with HMG-I(Y). Interacts with SPOP. Part of a PDX1:PBX1b:MEIS2b complex (By similarity).</text>
</comment>
<comment type="subcellular location">
    <subcellularLocation>
        <location evidence="4">Nucleus</location>
    </subcellularLocation>
    <subcellularLocation>
        <location evidence="1">Cytoplasm</location>
        <location evidence="1">Cytosol</location>
    </subcellularLocation>
</comment>
<comment type="domain">
    <text evidence="1">The Antp-type hexapeptide mediates heterodimerization with PBX on a regulatory element of the somatostatin promoter.</text>
</comment>
<comment type="domain">
    <text evidence="1">The homeodomain, which contains the nuclear localization signal, not only mediates DNA-binding, but also acts as a protein-protein interaction domain for TCF3(E47), NEUROD1 and HMG-I(Y).</text>
</comment>
<comment type="PTM">
    <text evidence="1">Phosphorylated by the SAPK2 pathway at high intracellular glucose concentration. Phosphorylated by HIPK2 on Ser-268 upon glucose accumulation. This phosphorylation mediates subnuclear localization shifting. Phosphorylation by PASK may lead to translocation into the cytosol (By similarity).</text>
</comment>
<comment type="similarity">
    <text evidence="6">Belongs to the Antp homeobox family. IPF1/XlHbox-8 subfamily.</text>
</comment>
<organism>
    <name type="scientific">Pan troglodytes</name>
    <name type="common">Chimpanzee</name>
    <dbReference type="NCBI Taxonomy" id="9598"/>
    <lineage>
        <taxon>Eukaryota</taxon>
        <taxon>Metazoa</taxon>
        <taxon>Chordata</taxon>
        <taxon>Craniata</taxon>
        <taxon>Vertebrata</taxon>
        <taxon>Euteleostomi</taxon>
        <taxon>Mammalia</taxon>
        <taxon>Eutheria</taxon>
        <taxon>Euarchontoglires</taxon>
        <taxon>Primates</taxon>
        <taxon>Haplorrhini</taxon>
        <taxon>Catarrhini</taxon>
        <taxon>Hominidae</taxon>
        <taxon>Pan</taxon>
    </lineage>
</organism>
<gene>
    <name type="primary">PDX1</name>
    <name type="synonym">IPF1</name>
</gene>
<evidence type="ECO:0000250" key="1"/>
<evidence type="ECO:0000250" key="2">
    <source>
        <dbReference type="UniProtKB" id="P52945"/>
    </source>
</evidence>
<evidence type="ECO:0000250" key="3">
    <source>
        <dbReference type="UniProtKB" id="P52946"/>
    </source>
</evidence>
<evidence type="ECO:0000255" key="4">
    <source>
        <dbReference type="PROSITE-ProRule" id="PRU00108"/>
    </source>
</evidence>
<evidence type="ECO:0000256" key="5">
    <source>
        <dbReference type="SAM" id="MobiDB-lite"/>
    </source>
</evidence>
<evidence type="ECO:0000305" key="6"/>
<proteinExistence type="inferred from homology"/>
<name>PDX1_PANTR</name>
<accession>A2T756</accession>
<dbReference type="EMBL" id="DQ977375">
    <property type="protein sequence ID" value="ABM92011.1"/>
    <property type="molecule type" value="Genomic_DNA"/>
</dbReference>
<dbReference type="RefSeq" id="NP_001074947.1">
    <property type="nucleotide sequence ID" value="NM_001081478.1"/>
</dbReference>
<dbReference type="BMRB" id="A2T756"/>
<dbReference type="SMR" id="A2T756"/>
<dbReference type="FunCoup" id="A2T756">
    <property type="interactions" value="1288"/>
</dbReference>
<dbReference type="STRING" id="9598.ENSPTRP00000009769"/>
<dbReference type="PaxDb" id="9598-ENSPTRP00000009769"/>
<dbReference type="Ensembl" id="ENSPTRT00000010560.5">
    <property type="protein sequence ID" value="ENSPTRP00000009769.4"/>
    <property type="gene ID" value="ENSPTRG00000005736.5"/>
</dbReference>
<dbReference type="GeneID" id="452507"/>
<dbReference type="KEGG" id="ptr:452507"/>
<dbReference type="CTD" id="3651"/>
<dbReference type="VGNC" id="VGNC:5093">
    <property type="gene designation" value="PDX1"/>
</dbReference>
<dbReference type="eggNOG" id="KOG0489">
    <property type="taxonomic scope" value="Eukaryota"/>
</dbReference>
<dbReference type="GeneTree" id="ENSGT00940000162542"/>
<dbReference type="HOGENOM" id="CLU_087401_0_0_1"/>
<dbReference type="InParanoid" id="A2T756"/>
<dbReference type="OMA" id="SHSHTWK"/>
<dbReference type="OrthoDB" id="16205at9604"/>
<dbReference type="TreeFam" id="TF326223"/>
<dbReference type="Proteomes" id="UP000002277">
    <property type="component" value="Chromosome 13"/>
</dbReference>
<dbReference type="GO" id="GO:0005829">
    <property type="term" value="C:cytosol"/>
    <property type="evidence" value="ECO:0007669"/>
    <property type="project" value="UniProtKB-SubCell"/>
</dbReference>
<dbReference type="GO" id="GO:0016607">
    <property type="term" value="C:nuclear speck"/>
    <property type="evidence" value="ECO:0007669"/>
    <property type="project" value="Ensembl"/>
</dbReference>
<dbReference type="GO" id="GO:0005634">
    <property type="term" value="C:nucleus"/>
    <property type="evidence" value="ECO:0000318"/>
    <property type="project" value="GO_Central"/>
</dbReference>
<dbReference type="GO" id="GO:0003682">
    <property type="term" value="F:chromatin binding"/>
    <property type="evidence" value="ECO:0007669"/>
    <property type="project" value="Ensembl"/>
</dbReference>
<dbReference type="GO" id="GO:0000981">
    <property type="term" value="F:DNA-binding transcription factor activity, RNA polymerase II-specific"/>
    <property type="evidence" value="ECO:0000318"/>
    <property type="project" value="GO_Central"/>
</dbReference>
<dbReference type="GO" id="GO:0000978">
    <property type="term" value="F:RNA polymerase II cis-regulatory region sequence-specific DNA binding"/>
    <property type="evidence" value="ECO:0000318"/>
    <property type="project" value="GO_Central"/>
</dbReference>
<dbReference type="GO" id="GO:0048565">
    <property type="term" value="P:digestive tract development"/>
    <property type="evidence" value="ECO:0007669"/>
    <property type="project" value="Ensembl"/>
</dbReference>
<dbReference type="GO" id="GO:0031017">
    <property type="term" value="P:exocrine pancreas development"/>
    <property type="evidence" value="ECO:0007669"/>
    <property type="project" value="Ensembl"/>
</dbReference>
<dbReference type="GO" id="GO:0042593">
    <property type="term" value="P:glucose homeostasis"/>
    <property type="evidence" value="ECO:0007669"/>
    <property type="project" value="Ensembl"/>
</dbReference>
<dbReference type="GO" id="GO:0006006">
    <property type="term" value="P:glucose metabolic process"/>
    <property type="evidence" value="ECO:0007669"/>
    <property type="project" value="Ensembl"/>
</dbReference>
<dbReference type="GO" id="GO:0030073">
    <property type="term" value="P:insulin secretion"/>
    <property type="evidence" value="ECO:0007669"/>
    <property type="project" value="Ensembl"/>
</dbReference>
<dbReference type="GO" id="GO:0070059">
    <property type="term" value="P:intrinsic apoptotic signaling pathway in response to endoplasmic reticulum stress"/>
    <property type="evidence" value="ECO:0007669"/>
    <property type="project" value="Ensembl"/>
</dbReference>
<dbReference type="GO" id="GO:0001889">
    <property type="term" value="P:liver development"/>
    <property type="evidence" value="ECO:0007669"/>
    <property type="project" value="Ensembl"/>
</dbReference>
<dbReference type="GO" id="GO:0016331">
    <property type="term" value="P:morphogenesis of embryonic epithelium"/>
    <property type="evidence" value="ECO:0007669"/>
    <property type="project" value="Ensembl"/>
</dbReference>
<dbReference type="GO" id="GO:1902236">
    <property type="term" value="P:negative regulation of endoplasmic reticulum stress-induced intrinsic apoptotic signaling pathway"/>
    <property type="evidence" value="ECO:0007669"/>
    <property type="project" value="Ensembl"/>
</dbReference>
<dbReference type="GO" id="GO:0050680">
    <property type="term" value="P:negative regulation of epithelial cell proliferation"/>
    <property type="evidence" value="ECO:0007669"/>
    <property type="project" value="Ensembl"/>
</dbReference>
<dbReference type="GO" id="GO:0000122">
    <property type="term" value="P:negative regulation of transcription by RNA polymerase II"/>
    <property type="evidence" value="ECO:0007669"/>
    <property type="project" value="Ensembl"/>
</dbReference>
<dbReference type="GO" id="GO:2000675">
    <property type="term" value="P:negative regulation of type B pancreatic cell apoptotic process"/>
    <property type="evidence" value="ECO:0007669"/>
    <property type="project" value="Ensembl"/>
</dbReference>
<dbReference type="GO" id="GO:0032024">
    <property type="term" value="P:positive regulation of insulin secretion"/>
    <property type="evidence" value="ECO:0000250"/>
    <property type="project" value="UniProtKB"/>
</dbReference>
<dbReference type="GO" id="GO:0035774">
    <property type="term" value="P:positive regulation of insulin secretion involved in cellular response to glucose stimulus"/>
    <property type="evidence" value="ECO:0007669"/>
    <property type="project" value="Ensembl"/>
</dbReference>
<dbReference type="GO" id="GO:0045944">
    <property type="term" value="P:positive regulation of transcription by RNA polymerase II"/>
    <property type="evidence" value="ECO:0007669"/>
    <property type="project" value="Ensembl"/>
</dbReference>
<dbReference type="GO" id="GO:1904692">
    <property type="term" value="P:positive regulation of type B pancreatic cell proliferation"/>
    <property type="evidence" value="ECO:0007669"/>
    <property type="project" value="Ensembl"/>
</dbReference>
<dbReference type="GO" id="GO:0006357">
    <property type="term" value="P:regulation of transcription by RNA polymerase II"/>
    <property type="evidence" value="ECO:0000318"/>
    <property type="project" value="GO_Central"/>
</dbReference>
<dbReference type="GO" id="GO:0097050">
    <property type="term" value="P:type B pancreatic cell apoptotic process"/>
    <property type="evidence" value="ECO:0007669"/>
    <property type="project" value="Ensembl"/>
</dbReference>
<dbReference type="GO" id="GO:0003309">
    <property type="term" value="P:type B pancreatic cell differentiation"/>
    <property type="evidence" value="ECO:0000318"/>
    <property type="project" value="GO_Central"/>
</dbReference>
<dbReference type="GO" id="GO:0044342">
    <property type="term" value="P:type B pancreatic cell proliferation"/>
    <property type="evidence" value="ECO:0007669"/>
    <property type="project" value="Ensembl"/>
</dbReference>
<dbReference type="CDD" id="cd00086">
    <property type="entry name" value="homeodomain"/>
    <property type="match status" value="1"/>
</dbReference>
<dbReference type="FunFam" id="1.10.10.60:FF:000176">
    <property type="entry name" value="pancreas/duodenum homeobox protein 1"/>
    <property type="match status" value="1"/>
</dbReference>
<dbReference type="Gene3D" id="1.10.10.60">
    <property type="entry name" value="Homeodomain-like"/>
    <property type="match status" value="1"/>
</dbReference>
<dbReference type="InterPro" id="IPR001356">
    <property type="entry name" value="HD"/>
</dbReference>
<dbReference type="InterPro" id="IPR020479">
    <property type="entry name" value="HD_metazoa"/>
</dbReference>
<dbReference type="InterPro" id="IPR017995">
    <property type="entry name" value="Homeobox_antennapedia"/>
</dbReference>
<dbReference type="InterPro" id="IPR017970">
    <property type="entry name" value="Homeobox_CS"/>
</dbReference>
<dbReference type="InterPro" id="IPR009057">
    <property type="entry name" value="Homeodomain-like_sf"/>
</dbReference>
<dbReference type="PANTHER" id="PTHR45664:SF12">
    <property type="entry name" value="PANCREAS_DUODENUM HOMEOBOX PROTEIN 1"/>
    <property type="match status" value="1"/>
</dbReference>
<dbReference type="PANTHER" id="PTHR45664">
    <property type="entry name" value="PROTEIN ZERKNUELLT 1-RELATED"/>
    <property type="match status" value="1"/>
</dbReference>
<dbReference type="Pfam" id="PF00046">
    <property type="entry name" value="Homeodomain"/>
    <property type="match status" value="1"/>
</dbReference>
<dbReference type="PRINTS" id="PR00025">
    <property type="entry name" value="ANTENNAPEDIA"/>
</dbReference>
<dbReference type="PRINTS" id="PR00024">
    <property type="entry name" value="HOMEOBOX"/>
</dbReference>
<dbReference type="SMART" id="SM00389">
    <property type="entry name" value="HOX"/>
    <property type="match status" value="1"/>
</dbReference>
<dbReference type="SUPFAM" id="SSF46689">
    <property type="entry name" value="Homeodomain-like"/>
    <property type="match status" value="1"/>
</dbReference>
<dbReference type="PROSITE" id="PS00027">
    <property type="entry name" value="HOMEOBOX_1"/>
    <property type="match status" value="1"/>
</dbReference>
<dbReference type="PROSITE" id="PS50071">
    <property type="entry name" value="HOMEOBOX_2"/>
    <property type="match status" value="1"/>
</dbReference>
<sequence length="283" mass="30731">MNGEEQYYAATQLYKDSCAFQRGPAPEFSAGPPACLYMGRQPPPPPPHPFPGALGALEQGSPPDISPYEVPPLADDPAVAHLHHHLPAQLALPHPPAGPFPEGAEPGVLEEPNRVQLPFPWMKSTKAHAWKGQWAGGAYAAEPEENKRTRTAYTRAQLLELEKEFLFNKYISRPRRVELAVMLNLTERHIKIWFQNRRMKWKKEEDKKRGGGTAVGGGGVAEPEQDCAVTSGEELLALPPPPPPGGAVPPAAPVAAREGRLPPGLSASPQPSSVAPRRPQEPR</sequence>
<feature type="chain" id="PRO_0000285454" description="Pancreas/duodenum homeobox protein 1">
    <location>
        <begin position="1"/>
        <end position="283"/>
    </location>
</feature>
<feature type="DNA-binding region" description="Homeobox" evidence="4">
    <location>
        <begin position="146"/>
        <end position="205"/>
    </location>
</feature>
<feature type="region of interest" description="Transactivation domain" evidence="1">
    <location>
        <begin position="13"/>
        <end position="73"/>
    </location>
</feature>
<feature type="region of interest" description="Disordered" evidence="5">
    <location>
        <begin position="34"/>
        <end position="72"/>
    </location>
</feature>
<feature type="region of interest" description="Disordered" evidence="5">
    <location>
        <begin position="201"/>
        <end position="283"/>
    </location>
</feature>
<feature type="short sequence motif" description="Antp-type hexapeptide">
    <location>
        <begin position="118"/>
        <end position="123"/>
    </location>
</feature>
<feature type="short sequence motif" description="Nuclear localization signal" evidence="1">
    <location>
        <begin position="197"/>
        <end position="203"/>
    </location>
</feature>
<feature type="compositionally biased region" description="Pro residues" evidence="5">
    <location>
        <begin position="41"/>
        <end position="50"/>
    </location>
</feature>
<feature type="compositionally biased region" description="Gly residues" evidence="5">
    <location>
        <begin position="211"/>
        <end position="220"/>
    </location>
</feature>
<feature type="compositionally biased region" description="Pro residues" evidence="5">
    <location>
        <begin position="238"/>
        <end position="252"/>
    </location>
</feature>
<feature type="modified residue" description="Phosphothreonine; by PASK" evidence="3">
    <location>
        <position position="151"/>
    </location>
</feature>
<feature type="modified residue" description="Phosphoserine; by HIPK2" evidence="2">
    <location>
        <position position="268"/>
    </location>
</feature>
<reference key="1">
    <citation type="submission" date="2006-08" db="EMBL/GenBank/DDBJ databases">
        <title>Positive selection in transcription factor genes on the human lineage.</title>
        <authorList>
            <person name="Nickel G.C."/>
            <person name="Tefft D.L."/>
            <person name="Trevarthen K."/>
            <person name="Funt J."/>
            <person name="Adams M.D."/>
        </authorList>
    </citation>
    <scope>NUCLEOTIDE SEQUENCE [GENOMIC DNA]</scope>
</reference>
<keyword id="KW-0010">Activator</keyword>
<keyword id="KW-0963">Cytoplasm</keyword>
<keyword id="KW-0238">DNA-binding</keyword>
<keyword id="KW-0371">Homeobox</keyword>
<keyword id="KW-0539">Nucleus</keyword>
<keyword id="KW-0597">Phosphoprotein</keyword>
<keyword id="KW-1185">Reference proteome</keyword>
<keyword id="KW-0804">Transcription</keyword>
<keyword id="KW-0805">Transcription regulation</keyword>
<protein>
    <recommendedName>
        <fullName>Pancreas/duodenum homeobox protein 1</fullName>
    </recommendedName>
    <alternativeName>
        <fullName>Homeodomain protein PDX1</fullName>
    </alternativeName>
    <alternativeName>
        <fullName>Insulin promoter factor 1</fullName>
        <shortName>IPF-1</shortName>
    </alternativeName>
</protein>